<comment type="function">
    <text>Cadherins are calcium-dependent cell adhesion proteins. They preferentially interact with themselves in a homophilic manner in connecting cells; cadherins may thus contribute to the sorting of heterogeneous cell types. PB-cadherins may have a role in the morphological organization of pituitary gland and brain tissues.</text>
</comment>
<comment type="subcellular location">
    <subcellularLocation>
        <location>Cell membrane</location>
        <topology>Single-pass type I membrane protein</topology>
    </subcellularLocation>
</comment>
<comment type="tissue specificity">
    <text>Predominantly expressed in brain. Abundant in olfactory bulb, cerebrum, and cerebellum, less in pons, medulla, and spinal cord. Low expression in heart. No expression in lung, liver, spleen, kidney, testis, stomach, intestine, colon, and placenta.</text>
</comment>
<comment type="developmental stage">
    <text evidence="5">Expressed at 9.5 dpc onwards. At 10.5 dpc, in brain (telencephalic vesicles and isthmus), spinal cord and limb buds (in the zone of polarizing activity). At 14.5 dpc, in olfactory bulb and cerebellum.</text>
</comment>
<comment type="induction">
    <text>Down-regulated by thyroid hormone.</text>
</comment>
<comment type="domain">
    <text evidence="1">Three calcium ions are usually bound at the interface of each cadherin domain and rigidify the connections, imparting a strong curvature to the full-length ectodomain.</text>
</comment>
<gene>
    <name type="primary">Cdh22</name>
</gene>
<organism>
    <name type="scientific">Mus musculus</name>
    <name type="common">Mouse</name>
    <dbReference type="NCBI Taxonomy" id="10090"/>
    <lineage>
        <taxon>Eukaryota</taxon>
        <taxon>Metazoa</taxon>
        <taxon>Chordata</taxon>
        <taxon>Craniata</taxon>
        <taxon>Vertebrata</taxon>
        <taxon>Euteleostomi</taxon>
        <taxon>Mammalia</taxon>
        <taxon>Eutheria</taxon>
        <taxon>Euarchontoglires</taxon>
        <taxon>Glires</taxon>
        <taxon>Rodentia</taxon>
        <taxon>Myomorpha</taxon>
        <taxon>Muroidea</taxon>
        <taxon>Muridae</taxon>
        <taxon>Murinae</taxon>
        <taxon>Mus</taxon>
        <taxon>Mus</taxon>
    </lineage>
</organism>
<protein>
    <recommendedName>
        <fullName>Cadherin-22</fullName>
    </recommendedName>
    <alternativeName>
        <fullName>Pituitary and brain cadherin</fullName>
        <shortName>PB-cadherin</shortName>
    </alternativeName>
</protein>
<evidence type="ECO:0000250" key="1"/>
<evidence type="ECO:0000255" key="2"/>
<evidence type="ECO:0000255" key="3">
    <source>
        <dbReference type="PROSITE-ProRule" id="PRU00043"/>
    </source>
</evidence>
<evidence type="ECO:0000256" key="4">
    <source>
        <dbReference type="SAM" id="MobiDB-lite"/>
    </source>
</evidence>
<evidence type="ECO:0000269" key="5">
    <source>
    </source>
</evidence>
<evidence type="ECO:0000305" key="6"/>
<evidence type="ECO:0007829" key="7">
    <source>
        <dbReference type="PDB" id="6CG7"/>
    </source>
</evidence>
<feature type="signal peptide" evidence="2">
    <location>
        <begin position="1"/>
        <end position="33"/>
    </location>
</feature>
<feature type="chain" id="PRO_0000003822" description="Cadherin-22">
    <location>
        <begin position="34"/>
        <end position="813"/>
    </location>
</feature>
<feature type="topological domain" description="Extracellular" evidence="2">
    <location>
        <begin position="34"/>
        <end position="621"/>
    </location>
</feature>
<feature type="transmembrane region" description="Helical" evidence="2">
    <location>
        <begin position="622"/>
        <end position="642"/>
    </location>
</feature>
<feature type="topological domain" description="Cytoplasmic" evidence="2">
    <location>
        <begin position="643"/>
        <end position="813"/>
    </location>
</feature>
<feature type="domain" description="Cadherin 1" evidence="3">
    <location>
        <begin position="61"/>
        <end position="165"/>
    </location>
</feature>
<feature type="domain" description="Cadherin 2" evidence="3">
    <location>
        <begin position="166"/>
        <end position="274"/>
    </location>
</feature>
<feature type="domain" description="Cadherin 3" evidence="3">
    <location>
        <begin position="275"/>
        <end position="391"/>
    </location>
</feature>
<feature type="domain" description="Cadherin 4" evidence="3">
    <location>
        <begin position="392"/>
        <end position="495"/>
    </location>
</feature>
<feature type="domain" description="Cadherin 5" evidence="3">
    <location>
        <begin position="496"/>
        <end position="613"/>
    </location>
</feature>
<feature type="region of interest" description="Disordered" evidence="4">
    <location>
        <begin position="696"/>
        <end position="726"/>
    </location>
</feature>
<feature type="glycosylation site" description="N-linked (GlcNAc...) asparagine" evidence="2">
    <location>
        <position position="159"/>
    </location>
</feature>
<feature type="glycosylation site" description="N-linked (GlcNAc...) asparagine" evidence="2">
    <location>
        <position position="463"/>
    </location>
</feature>
<feature type="glycosylation site" description="N-linked (GlcNAc...) asparagine" evidence="2">
    <location>
        <position position="609"/>
    </location>
</feature>
<feature type="sequence conflict" description="In Ref. 1; BAA34426." evidence="6" ref="1">
    <original>S</original>
    <variation>R</variation>
    <location>
        <position position="199"/>
    </location>
</feature>
<feature type="strand" evidence="7">
    <location>
        <begin position="65"/>
        <end position="71"/>
    </location>
</feature>
<feature type="strand" evidence="7">
    <location>
        <begin position="78"/>
        <end position="82"/>
    </location>
</feature>
<feature type="strand" evidence="7">
    <location>
        <begin position="90"/>
        <end position="92"/>
    </location>
</feature>
<feature type="strand" evidence="7">
    <location>
        <begin position="94"/>
        <end position="100"/>
    </location>
</feature>
<feature type="turn" evidence="7">
    <location>
        <begin position="104"/>
        <end position="106"/>
    </location>
</feature>
<feature type="strand" evidence="7">
    <location>
        <begin position="107"/>
        <end position="109"/>
    </location>
</feature>
<feature type="turn" evidence="7">
    <location>
        <begin position="111"/>
        <end position="113"/>
    </location>
</feature>
<feature type="strand" evidence="7">
    <location>
        <begin position="115"/>
        <end position="118"/>
    </location>
</feature>
<feature type="turn" evidence="7">
    <location>
        <begin position="124"/>
        <end position="126"/>
    </location>
</feature>
<feature type="strand" evidence="7">
    <location>
        <begin position="128"/>
        <end position="138"/>
    </location>
</feature>
<feature type="turn" evidence="7">
    <location>
        <begin position="139"/>
        <end position="141"/>
    </location>
</feature>
<feature type="strand" evidence="7">
    <location>
        <begin position="144"/>
        <end position="156"/>
    </location>
</feature>
<feature type="strand" evidence="7">
    <location>
        <begin position="171"/>
        <end position="175"/>
    </location>
</feature>
<feature type="strand" evidence="7">
    <location>
        <begin position="183"/>
        <end position="186"/>
    </location>
</feature>
<feature type="turn" evidence="7">
    <location>
        <begin position="198"/>
        <end position="201"/>
    </location>
</feature>
<feature type="strand" evidence="7">
    <location>
        <begin position="204"/>
        <end position="207"/>
    </location>
</feature>
<feature type="strand" evidence="7">
    <location>
        <begin position="213"/>
        <end position="216"/>
    </location>
</feature>
<feature type="turn" evidence="7">
    <location>
        <begin position="218"/>
        <end position="220"/>
    </location>
</feature>
<feature type="strand" evidence="7">
    <location>
        <begin position="222"/>
        <end position="226"/>
    </location>
</feature>
<feature type="turn" evidence="7">
    <location>
        <begin position="232"/>
        <end position="234"/>
    </location>
</feature>
<feature type="strand" evidence="7">
    <location>
        <begin position="237"/>
        <end position="246"/>
    </location>
</feature>
<feature type="helix" evidence="7">
    <location>
        <begin position="247"/>
        <end position="249"/>
    </location>
</feature>
<feature type="strand" evidence="7">
    <location>
        <begin position="255"/>
        <end position="265"/>
    </location>
</feature>
<keyword id="KW-0002">3D-structure</keyword>
<keyword id="KW-0106">Calcium</keyword>
<keyword id="KW-0130">Cell adhesion</keyword>
<keyword id="KW-1003">Cell membrane</keyword>
<keyword id="KW-0325">Glycoprotein</keyword>
<keyword id="KW-0472">Membrane</keyword>
<keyword id="KW-0479">Metal-binding</keyword>
<keyword id="KW-1185">Reference proteome</keyword>
<keyword id="KW-0677">Repeat</keyword>
<keyword id="KW-0732">Signal</keyword>
<keyword id="KW-0812">Transmembrane</keyword>
<keyword id="KW-1133">Transmembrane helix</keyword>
<name>CAD22_MOUSE</name>
<sequence>MRPRPEGALRAGAALSPVLLFLLLLPLLGHLWAASTPAPSSLSPGAQEDNQLGAGRVKRGWVWNQFFVVEEYTGTEPLYVGKIHSDSDEGDGTIKYTISGEGAGTIFLIDELTGDIHATERLDREQKTFYTLRAQARDRATNRLLEPESEFIIKVQDINDSEPRFLHGPYIGSVAELSPTGTSVMQVMASDADDPTYGSSARLVYSVLDGEHHFTVDPKTGVIRTAVPDLDRESQERYEVVIQATDMAGQLGGLSGSTTVTIVVTDVNDNPPRFPQKMYQFSIQESAPIGTAVGRVKAEDSDVGENTDMTYHLREESGSGGDAFKVTTDSDTQEAIIVVQKHLDFESQQVHTVVLEALNKFVDPRFADLGTFRDQAIVRVAVTDVDEPPEFRPPSGLLEVQEDAQVGSLVGVVTARDPDAANRPVRYAIDRDSDLEQIFDIDADTGAIVTGKGLDRETAGWHNITVLAMEADNHAQLSRASLRIRILDVNDNPPELATPYEAAVCEDAKPGQLIQTISVVDRDEPQGGHRFYFRLVPEAPSNPHFSLLDIEDNTAAVHTQHVGFNRQEQDVFLLPILVVDSGPPTLSSTGTLTIRICGCDSSGTIQSCNTTAFVMAASLSPGALIALLVCVLILVVLALLILTLRRHHKSHLSSDVDEDMRDNVIKYNDEGGGEQDTEAYDMSALRSLYDFGELKGGDPGGGAASPPQAASSSERHSLPRGPSSPEPDFSVFRDFISRKVALADADLSVPPYDAFQTYAFEGAGSPAASLSSLHSGSTGSEQDFAFLRAWGPRFRPLAALYAGHRGDDEAPAS</sequence>
<reference key="1">
    <citation type="journal article" date="1999" name="Dev. Dyn.">
        <title>Expression of a novel type of classic cadherin, PB-cadherin in developing brain and limb buds.</title>
        <authorList>
            <person name="Kitajima K."/>
            <person name="Koshimizu U."/>
            <person name="Nakamura T."/>
        </authorList>
    </citation>
    <scope>NUCLEOTIDE SEQUENCE [MRNA]</scope>
    <scope>DEVELOPMENTAL STAGE</scope>
    <source>
        <strain>ICR</strain>
        <tissue>Brain</tissue>
    </source>
</reference>
<reference key="2">
    <citation type="journal article" date="2009" name="PLoS Biol.">
        <title>Lineage-specific biology revealed by a finished genome assembly of the mouse.</title>
        <authorList>
            <person name="Church D.M."/>
            <person name="Goodstadt L."/>
            <person name="Hillier L.W."/>
            <person name="Zody M.C."/>
            <person name="Goldstein S."/>
            <person name="She X."/>
            <person name="Bult C.J."/>
            <person name="Agarwala R."/>
            <person name="Cherry J.L."/>
            <person name="DiCuccio M."/>
            <person name="Hlavina W."/>
            <person name="Kapustin Y."/>
            <person name="Meric P."/>
            <person name="Maglott D."/>
            <person name="Birtle Z."/>
            <person name="Marques A.C."/>
            <person name="Graves T."/>
            <person name="Zhou S."/>
            <person name="Teague B."/>
            <person name="Potamousis K."/>
            <person name="Churas C."/>
            <person name="Place M."/>
            <person name="Herschleb J."/>
            <person name="Runnheim R."/>
            <person name="Forrest D."/>
            <person name="Amos-Landgraf J."/>
            <person name="Schwartz D.C."/>
            <person name="Cheng Z."/>
            <person name="Lindblad-Toh K."/>
            <person name="Eichler E.E."/>
            <person name="Ponting C.P."/>
        </authorList>
    </citation>
    <scope>NUCLEOTIDE SEQUENCE [LARGE SCALE GENOMIC DNA]</scope>
    <source>
        <strain>C57BL/6J</strain>
    </source>
</reference>
<accession>Q9WTP5</accession>
<accession>I7HIP9</accession>
<proteinExistence type="evidence at protein level"/>
<dbReference type="EMBL" id="AB019618">
    <property type="protein sequence ID" value="BAA34426.1"/>
    <property type="molecule type" value="mRNA"/>
</dbReference>
<dbReference type="EMBL" id="AL591411">
    <property type="status" value="NOT_ANNOTATED_CDS"/>
    <property type="molecule type" value="Genomic_DNA"/>
</dbReference>
<dbReference type="EMBL" id="AL591430">
    <property type="status" value="NOT_ANNOTATED_CDS"/>
    <property type="molecule type" value="Genomic_DNA"/>
</dbReference>
<dbReference type="CCDS" id="CCDS17073.1"/>
<dbReference type="RefSeq" id="NP_778153.2">
    <property type="nucleotide sequence ID" value="NM_174988.3"/>
</dbReference>
<dbReference type="RefSeq" id="XP_036013049.1">
    <property type="nucleotide sequence ID" value="XM_036157156.1"/>
</dbReference>
<dbReference type="PDB" id="6CG7">
    <property type="method" value="X-ray"/>
    <property type="resolution" value="2.71 A"/>
    <property type="chains" value="A/B=60-266"/>
</dbReference>
<dbReference type="PDBsum" id="6CG7"/>
<dbReference type="SMR" id="Q9WTP5"/>
<dbReference type="FunCoup" id="Q9WTP5">
    <property type="interactions" value="36"/>
</dbReference>
<dbReference type="STRING" id="10090.ENSMUSP00000066864"/>
<dbReference type="GlyCosmos" id="Q9WTP5">
    <property type="glycosylation" value="3 sites, No reported glycans"/>
</dbReference>
<dbReference type="GlyGen" id="Q9WTP5">
    <property type="glycosylation" value="3 sites, 2 N-linked glycans (2 sites)"/>
</dbReference>
<dbReference type="iPTMnet" id="Q9WTP5"/>
<dbReference type="PhosphoSitePlus" id="Q9WTP5"/>
<dbReference type="PaxDb" id="10090-ENSMUSP00000066864"/>
<dbReference type="ProteomicsDB" id="281743"/>
<dbReference type="Antibodypedia" id="2513">
    <property type="antibodies" value="122 antibodies from 22 providers"/>
</dbReference>
<dbReference type="DNASU" id="104010"/>
<dbReference type="Ensembl" id="ENSMUST00000065438.13">
    <property type="protein sequence ID" value="ENSMUSP00000066864.7"/>
    <property type="gene ID" value="ENSMUSG00000053166.15"/>
</dbReference>
<dbReference type="GeneID" id="104010"/>
<dbReference type="KEGG" id="mmu:104010"/>
<dbReference type="UCSC" id="uc008nxc.2">
    <property type="organism name" value="mouse"/>
</dbReference>
<dbReference type="AGR" id="MGI:1341843"/>
<dbReference type="CTD" id="64405"/>
<dbReference type="MGI" id="MGI:1341843">
    <property type="gene designation" value="Cdh22"/>
</dbReference>
<dbReference type="VEuPathDB" id="HostDB:ENSMUSG00000053166"/>
<dbReference type="eggNOG" id="KOG3594">
    <property type="taxonomic scope" value="Eukaryota"/>
</dbReference>
<dbReference type="GeneTree" id="ENSGT00940000159376"/>
<dbReference type="HOGENOM" id="CLU_005284_3_1_1"/>
<dbReference type="InParanoid" id="Q9WTP5"/>
<dbReference type="OMA" id="GAWAMHT"/>
<dbReference type="OrthoDB" id="6252479at2759"/>
<dbReference type="PhylomeDB" id="Q9WTP5"/>
<dbReference type="TreeFam" id="TF329887"/>
<dbReference type="BioGRID-ORCS" id="104010">
    <property type="hits" value="1 hit in 78 CRISPR screens"/>
</dbReference>
<dbReference type="PRO" id="PR:Q9WTP5"/>
<dbReference type="Proteomes" id="UP000000589">
    <property type="component" value="Chromosome 2"/>
</dbReference>
<dbReference type="RNAct" id="Q9WTP5">
    <property type="molecule type" value="protein"/>
</dbReference>
<dbReference type="Bgee" id="ENSMUSG00000053166">
    <property type="expression patterns" value="Expressed in motor neuron and 143 other cell types or tissues"/>
</dbReference>
<dbReference type="ExpressionAtlas" id="Q9WTP5">
    <property type="expression patterns" value="baseline and differential"/>
</dbReference>
<dbReference type="GO" id="GO:0005886">
    <property type="term" value="C:plasma membrane"/>
    <property type="evidence" value="ECO:0007669"/>
    <property type="project" value="UniProtKB-SubCell"/>
</dbReference>
<dbReference type="GO" id="GO:0005509">
    <property type="term" value="F:calcium ion binding"/>
    <property type="evidence" value="ECO:0007669"/>
    <property type="project" value="InterPro"/>
</dbReference>
<dbReference type="GO" id="GO:0016339">
    <property type="term" value="P:calcium-dependent cell-cell adhesion via plasma membrane cell adhesion molecules"/>
    <property type="evidence" value="ECO:0007669"/>
    <property type="project" value="Ensembl"/>
</dbReference>
<dbReference type="GO" id="GO:0007156">
    <property type="term" value="P:homophilic cell adhesion via plasma membrane adhesion molecules"/>
    <property type="evidence" value="ECO:0007669"/>
    <property type="project" value="InterPro"/>
</dbReference>
<dbReference type="CDD" id="cd11304">
    <property type="entry name" value="Cadherin_repeat"/>
    <property type="match status" value="5"/>
</dbReference>
<dbReference type="FunFam" id="4.10.900.10:FF:000007">
    <property type="entry name" value="Cadherin 22"/>
    <property type="match status" value="1"/>
</dbReference>
<dbReference type="FunFam" id="2.60.40.60:FF:000008">
    <property type="entry name" value="Cadherin 24"/>
    <property type="match status" value="1"/>
</dbReference>
<dbReference type="FunFam" id="2.60.40.60:FF:000009">
    <property type="entry name" value="Cadherin 24"/>
    <property type="match status" value="1"/>
</dbReference>
<dbReference type="FunFam" id="2.60.40.60:FF:000012">
    <property type="entry name" value="Cadherin 24"/>
    <property type="match status" value="1"/>
</dbReference>
<dbReference type="FunFam" id="2.60.40.60:FF:000017">
    <property type="entry name" value="Cadherin 24"/>
    <property type="match status" value="1"/>
</dbReference>
<dbReference type="FunFam" id="2.60.40.60:FF:000014">
    <property type="entry name" value="Cadherin 8"/>
    <property type="match status" value="1"/>
</dbReference>
<dbReference type="Gene3D" id="2.60.40.60">
    <property type="entry name" value="Cadherins"/>
    <property type="match status" value="5"/>
</dbReference>
<dbReference type="Gene3D" id="4.10.900.10">
    <property type="entry name" value="TCF3-CBD (Catenin binding domain)"/>
    <property type="match status" value="1"/>
</dbReference>
<dbReference type="InterPro" id="IPR039808">
    <property type="entry name" value="Cadherin"/>
</dbReference>
<dbReference type="InterPro" id="IPR002126">
    <property type="entry name" value="Cadherin-like_dom"/>
</dbReference>
<dbReference type="InterPro" id="IPR015919">
    <property type="entry name" value="Cadherin-like_sf"/>
</dbReference>
<dbReference type="InterPro" id="IPR020894">
    <property type="entry name" value="Cadherin_CS"/>
</dbReference>
<dbReference type="InterPro" id="IPR000233">
    <property type="entry name" value="Cadherin_Y-type_LIR"/>
</dbReference>
<dbReference type="InterPro" id="IPR027397">
    <property type="entry name" value="Catenin-bd_sf"/>
</dbReference>
<dbReference type="PANTHER" id="PTHR24027:SF311">
    <property type="entry name" value="CADHERIN-22"/>
    <property type="match status" value="1"/>
</dbReference>
<dbReference type="PANTHER" id="PTHR24027">
    <property type="entry name" value="CADHERIN-23"/>
    <property type="match status" value="1"/>
</dbReference>
<dbReference type="Pfam" id="PF01049">
    <property type="entry name" value="CADH_Y-type_LIR"/>
    <property type="match status" value="1"/>
</dbReference>
<dbReference type="Pfam" id="PF00028">
    <property type="entry name" value="Cadherin"/>
    <property type="match status" value="5"/>
</dbReference>
<dbReference type="PRINTS" id="PR00205">
    <property type="entry name" value="CADHERIN"/>
</dbReference>
<dbReference type="SMART" id="SM00112">
    <property type="entry name" value="CA"/>
    <property type="match status" value="5"/>
</dbReference>
<dbReference type="SUPFAM" id="SSF49313">
    <property type="entry name" value="Cadherin-like"/>
    <property type="match status" value="5"/>
</dbReference>
<dbReference type="PROSITE" id="PS00232">
    <property type="entry name" value="CADHERIN_1"/>
    <property type="match status" value="2"/>
</dbReference>
<dbReference type="PROSITE" id="PS50268">
    <property type="entry name" value="CADHERIN_2"/>
    <property type="match status" value="5"/>
</dbReference>